<evidence type="ECO:0000255" key="1">
    <source>
        <dbReference type="HAMAP-Rule" id="MF_00161"/>
    </source>
</evidence>
<proteinExistence type="inferred from homology"/>
<dbReference type="EC" id="3.4.23.36" evidence="1"/>
<dbReference type="EMBL" id="CT978603">
    <property type="protein sequence ID" value="CAK28192.1"/>
    <property type="molecule type" value="Genomic_DNA"/>
</dbReference>
<dbReference type="SMR" id="A5GTI3"/>
<dbReference type="STRING" id="316278.SynRCC307_1289"/>
<dbReference type="KEGG" id="syr:SynRCC307_1289"/>
<dbReference type="eggNOG" id="COG0597">
    <property type="taxonomic scope" value="Bacteria"/>
</dbReference>
<dbReference type="HOGENOM" id="CLU_083252_3_2_3"/>
<dbReference type="OrthoDB" id="9810259at2"/>
<dbReference type="UniPathway" id="UPA00665"/>
<dbReference type="Proteomes" id="UP000001115">
    <property type="component" value="Chromosome"/>
</dbReference>
<dbReference type="GO" id="GO:0005886">
    <property type="term" value="C:plasma membrane"/>
    <property type="evidence" value="ECO:0007669"/>
    <property type="project" value="UniProtKB-SubCell"/>
</dbReference>
<dbReference type="GO" id="GO:0004190">
    <property type="term" value="F:aspartic-type endopeptidase activity"/>
    <property type="evidence" value="ECO:0007669"/>
    <property type="project" value="UniProtKB-UniRule"/>
</dbReference>
<dbReference type="GO" id="GO:0006508">
    <property type="term" value="P:proteolysis"/>
    <property type="evidence" value="ECO:0007669"/>
    <property type="project" value="UniProtKB-KW"/>
</dbReference>
<dbReference type="HAMAP" id="MF_00161">
    <property type="entry name" value="LspA"/>
    <property type="match status" value="1"/>
</dbReference>
<dbReference type="InterPro" id="IPR001872">
    <property type="entry name" value="Peptidase_A8"/>
</dbReference>
<dbReference type="NCBIfam" id="TIGR00077">
    <property type="entry name" value="lspA"/>
    <property type="match status" value="1"/>
</dbReference>
<dbReference type="PANTHER" id="PTHR33695">
    <property type="entry name" value="LIPOPROTEIN SIGNAL PEPTIDASE"/>
    <property type="match status" value="1"/>
</dbReference>
<dbReference type="PANTHER" id="PTHR33695:SF1">
    <property type="entry name" value="LIPOPROTEIN SIGNAL PEPTIDASE"/>
    <property type="match status" value="1"/>
</dbReference>
<dbReference type="Pfam" id="PF01252">
    <property type="entry name" value="Peptidase_A8"/>
    <property type="match status" value="1"/>
</dbReference>
<dbReference type="PRINTS" id="PR00781">
    <property type="entry name" value="LIPOSIGPTASE"/>
</dbReference>
<accession>A5GTI3</accession>
<organism>
    <name type="scientific">Synechococcus sp. (strain RCC307)</name>
    <dbReference type="NCBI Taxonomy" id="316278"/>
    <lineage>
        <taxon>Bacteria</taxon>
        <taxon>Bacillati</taxon>
        <taxon>Cyanobacteriota</taxon>
        <taxon>Cyanophyceae</taxon>
        <taxon>Synechococcales</taxon>
        <taxon>Synechococcaceae</taxon>
        <taxon>Synechococcus</taxon>
    </lineage>
</organism>
<name>LSPA_SYNR3</name>
<feature type="chain" id="PRO_1000076938" description="Lipoprotein signal peptidase">
    <location>
        <begin position="1"/>
        <end position="151"/>
    </location>
</feature>
<feature type="transmembrane region" description="Helical" evidence="1">
    <location>
        <begin position="61"/>
        <end position="81"/>
    </location>
</feature>
<feature type="transmembrane region" description="Helical" evidence="1">
    <location>
        <begin position="88"/>
        <end position="107"/>
    </location>
</feature>
<feature type="transmembrane region" description="Helical" evidence="1">
    <location>
        <begin position="128"/>
        <end position="148"/>
    </location>
</feature>
<feature type="active site" evidence="1">
    <location>
        <position position="117"/>
    </location>
</feature>
<feature type="active site" evidence="1">
    <location>
        <position position="133"/>
    </location>
</feature>
<gene>
    <name evidence="1" type="primary">lspA</name>
    <name type="ordered locus">SynRCC307_1289</name>
</gene>
<reference key="1">
    <citation type="submission" date="2006-05" db="EMBL/GenBank/DDBJ databases">
        <authorList>
            <consortium name="Genoscope"/>
        </authorList>
    </citation>
    <scope>NUCLEOTIDE SEQUENCE [LARGE SCALE GENOMIC DNA]</scope>
    <source>
        <strain>RCC307</strain>
    </source>
</reference>
<comment type="function">
    <text evidence="1">This protein specifically catalyzes the removal of signal peptides from prolipoproteins.</text>
</comment>
<comment type="catalytic activity">
    <reaction evidence="1">
        <text>Release of signal peptides from bacterial membrane prolipoproteins. Hydrolyzes -Xaa-Yaa-Zaa-|-(S,diacylglyceryl)Cys-, in which Xaa is hydrophobic (preferably Leu), and Yaa (Ala or Ser) and Zaa (Gly or Ala) have small, neutral side chains.</text>
        <dbReference type="EC" id="3.4.23.36"/>
    </reaction>
</comment>
<comment type="pathway">
    <text evidence="1">Protein modification; lipoprotein biosynthesis (signal peptide cleavage).</text>
</comment>
<comment type="subcellular location">
    <subcellularLocation>
        <location evidence="1">Cell inner membrane</location>
        <topology evidence="1">Multi-pass membrane protein</topology>
    </subcellularLocation>
</comment>
<comment type="similarity">
    <text evidence="1">Belongs to the peptidase A8 family.</text>
</comment>
<keyword id="KW-0064">Aspartyl protease</keyword>
<keyword id="KW-0997">Cell inner membrane</keyword>
<keyword id="KW-1003">Cell membrane</keyword>
<keyword id="KW-0378">Hydrolase</keyword>
<keyword id="KW-0472">Membrane</keyword>
<keyword id="KW-0645">Protease</keyword>
<keyword id="KW-1185">Reference proteome</keyword>
<keyword id="KW-0812">Transmembrane</keyword>
<keyword id="KW-1133">Transmembrane helix</keyword>
<sequence length="151" mass="16827">MAGKRFWILLSAAGLLLLDQLSKQWWLQNLPPGVSQSWIPGLLNLRLVWNDGAAFSLFRSGSQWLGWISLLVSVGLLIWIGRRGRQWSRWQAAAAAFLLAGSVGNGIDRWRYGAVIDGLELVPFSFPVFNLADVAINLAVLCLLIEAIRQR</sequence>
<protein>
    <recommendedName>
        <fullName evidence="1">Lipoprotein signal peptidase</fullName>
        <ecNumber evidence="1">3.4.23.36</ecNumber>
    </recommendedName>
    <alternativeName>
        <fullName evidence="1">Prolipoprotein signal peptidase</fullName>
    </alternativeName>
    <alternativeName>
        <fullName evidence="1">Signal peptidase II</fullName>
        <shortName evidence="1">SPase II</shortName>
    </alternativeName>
</protein>